<reference key="1">
    <citation type="submission" date="2005-09" db="EMBL/GenBank/DDBJ databases">
        <title>Complete genome sequence of Clostridium kluyveri and comparative genomics of Clostridia species.</title>
        <authorList>
            <person name="Inui M."/>
            <person name="Nonaka H."/>
            <person name="Shinoda Y."/>
            <person name="Ikenaga Y."/>
            <person name="Abe M."/>
            <person name="Naito K."/>
            <person name="Vertes A.A."/>
            <person name="Yukawa H."/>
        </authorList>
    </citation>
    <scope>NUCLEOTIDE SEQUENCE [LARGE SCALE GENOMIC DNA]</scope>
    <source>
        <strain>NBRC 12016</strain>
    </source>
</reference>
<feature type="chain" id="PRO_1000123883" description="Serine--tRNA ligase">
    <location>
        <begin position="1"/>
        <end position="426"/>
    </location>
</feature>
<feature type="binding site" evidence="1">
    <location>
        <begin position="233"/>
        <end position="235"/>
    </location>
    <ligand>
        <name>L-serine</name>
        <dbReference type="ChEBI" id="CHEBI:33384"/>
    </ligand>
</feature>
<feature type="binding site" evidence="1">
    <location>
        <begin position="264"/>
        <end position="266"/>
    </location>
    <ligand>
        <name>ATP</name>
        <dbReference type="ChEBI" id="CHEBI:30616"/>
    </ligand>
</feature>
<feature type="binding site" evidence="1">
    <location>
        <position position="287"/>
    </location>
    <ligand>
        <name>L-serine</name>
        <dbReference type="ChEBI" id="CHEBI:33384"/>
    </ligand>
</feature>
<feature type="binding site" evidence="1">
    <location>
        <begin position="351"/>
        <end position="354"/>
    </location>
    <ligand>
        <name>ATP</name>
        <dbReference type="ChEBI" id="CHEBI:30616"/>
    </ligand>
</feature>
<feature type="binding site" evidence="1">
    <location>
        <position position="387"/>
    </location>
    <ligand>
        <name>L-serine</name>
        <dbReference type="ChEBI" id="CHEBI:33384"/>
    </ligand>
</feature>
<keyword id="KW-0030">Aminoacyl-tRNA synthetase</keyword>
<keyword id="KW-0067">ATP-binding</keyword>
<keyword id="KW-0963">Cytoplasm</keyword>
<keyword id="KW-0436">Ligase</keyword>
<keyword id="KW-0547">Nucleotide-binding</keyword>
<keyword id="KW-0648">Protein biosynthesis</keyword>
<organism>
    <name type="scientific">Clostridium kluyveri (strain NBRC 12016)</name>
    <dbReference type="NCBI Taxonomy" id="583346"/>
    <lineage>
        <taxon>Bacteria</taxon>
        <taxon>Bacillati</taxon>
        <taxon>Bacillota</taxon>
        <taxon>Clostridia</taxon>
        <taxon>Eubacteriales</taxon>
        <taxon>Clostridiaceae</taxon>
        <taxon>Clostridium</taxon>
    </lineage>
</organism>
<gene>
    <name evidence="1" type="primary">serS</name>
    <name type="ordered locus">CKR_0013</name>
</gene>
<name>SYS_CLOK1</name>
<proteinExistence type="inferred from homology"/>
<evidence type="ECO:0000255" key="1">
    <source>
        <dbReference type="HAMAP-Rule" id="MF_00176"/>
    </source>
</evidence>
<comment type="function">
    <text evidence="1">Catalyzes the attachment of serine to tRNA(Ser). Is also able to aminoacylate tRNA(Sec) with serine, to form the misacylated tRNA L-seryl-tRNA(Sec), which will be further converted into selenocysteinyl-tRNA(Sec).</text>
</comment>
<comment type="catalytic activity">
    <reaction evidence="1">
        <text>tRNA(Ser) + L-serine + ATP = L-seryl-tRNA(Ser) + AMP + diphosphate + H(+)</text>
        <dbReference type="Rhea" id="RHEA:12292"/>
        <dbReference type="Rhea" id="RHEA-COMP:9669"/>
        <dbReference type="Rhea" id="RHEA-COMP:9703"/>
        <dbReference type="ChEBI" id="CHEBI:15378"/>
        <dbReference type="ChEBI" id="CHEBI:30616"/>
        <dbReference type="ChEBI" id="CHEBI:33019"/>
        <dbReference type="ChEBI" id="CHEBI:33384"/>
        <dbReference type="ChEBI" id="CHEBI:78442"/>
        <dbReference type="ChEBI" id="CHEBI:78533"/>
        <dbReference type="ChEBI" id="CHEBI:456215"/>
        <dbReference type="EC" id="6.1.1.11"/>
    </reaction>
</comment>
<comment type="catalytic activity">
    <reaction evidence="1">
        <text>tRNA(Sec) + L-serine + ATP = L-seryl-tRNA(Sec) + AMP + diphosphate + H(+)</text>
        <dbReference type="Rhea" id="RHEA:42580"/>
        <dbReference type="Rhea" id="RHEA-COMP:9742"/>
        <dbReference type="Rhea" id="RHEA-COMP:10128"/>
        <dbReference type="ChEBI" id="CHEBI:15378"/>
        <dbReference type="ChEBI" id="CHEBI:30616"/>
        <dbReference type="ChEBI" id="CHEBI:33019"/>
        <dbReference type="ChEBI" id="CHEBI:33384"/>
        <dbReference type="ChEBI" id="CHEBI:78442"/>
        <dbReference type="ChEBI" id="CHEBI:78533"/>
        <dbReference type="ChEBI" id="CHEBI:456215"/>
        <dbReference type="EC" id="6.1.1.11"/>
    </reaction>
</comment>
<comment type="pathway">
    <text evidence="1">Aminoacyl-tRNA biosynthesis; selenocysteinyl-tRNA(Sec) biosynthesis; L-seryl-tRNA(Sec) from L-serine and tRNA(Sec): step 1/1.</text>
</comment>
<comment type="subunit">
    <text evidence="1">Homodimer. The tRNA molecule binds across the dimer.</text>
</comment>
<comment type="subcellular location">
    <subcellularLocation>
        <location evidence="1">Cytoplasm</location>
    </subcellularLocation>
</comment>
<comment type="domain">
    <text evidence="1">Consists of two distinct domains, a catalytic core and a N-terminal extension that is involved in tRNA binding.</text>
</comment>
<comment type="similarity">
    <text evidence="1">Belongs to the class-II aminoacyl-tRNA synthetase family. Type-1 seryl-tRNA synthetase subfamily.</text>
</comment>
<protein>
    <recommendedName>
        <fullName evidence="1">Serine--tRNA ligase</fullName>
        <ecNumber evidence="1">6.1.1.11</ecNumber>
    </recommendedName>
    <alternativeName>
        <fullName evidence="1">Seryl-tRNA synthetase</fullName>
        <shortName evidence="1">SerRS</shortName>
    </alternativeName>
    <alternativeName>
        <fullName evidence="1">Seryl-tRNA(Ser/Sec) synthetase</fullName>
    </alternativeName>
</protein>
<accession>B9DXT9</accession>
<dbReference type="EC" id="6.1.1.11" evidence="1"/>
<dbReference type="EMBL" id="AP009049">
    <property type="protein sequence ID" value="BAH05064.1"/>
    <property type="molecule type" value="Genomic_DNA"/>
</dbReference>
<dbReference type="RefSeq" id="WP_011988626.1">
    <property type="nucleotide sequence ID" value="NC_011837.1"/>
</dbReference>
<dbReference type="SMR" id="B9DXT9"/>
<dbReference type="KEGG" id="ckr:CKR_0013"/>
<dbReference type="HOGENOM" id="CLU_023797_0_1_9"/>
<dbReference type="UniPathway" id="UPA00906">
    <property type="reaction ID" value="UER00895"/>
</dbReference>
<dbReference type="Proteomes" id="UP000007969">
    <property type="component" value="Chromosome"/>
</dbReference>
<dbReference type="GO" id="GO:0005737">
    <property type="term" value="C:cytoplasm"/>
    <property type="evidence" value="ECO:0007669"/>
    <property type="project" value="UniProtKB-SubCell"/>
</dbReference>
<dbReference type="GO" id="GO:0005524">
    <property type="term" value="F:ATP binding"/>
    <property type="evidence" value="ECO:0007669"/>
    <property type="project" value="UniProtKB-UniRule"/>
</dbReference>
<dbReference type="GO" id="GO:0140096">
    <property type="term" value="F:catalytic activity, acting on a protein"/>
    <property type="evidence" value="ECO:0007669"/>
    <property type="project" value="UniProtKB-ARBA"/>
</dbReference>
<dbReference type="GO" id="GO:0004828">
    <property type="term" value="F:serine-tRNA ligase activity"/>
    <property type="evidence" value="ECO:0007669"/>
    <property type="project" value="UniProtKB-UniRule"/>
</dbReference>
<dbReference type="GO" id="GO:0016740">
    <property type="term" value="F:transferase activity"/>
    <property type="evidence" value="ECO:0007669"/>
    <property type="project" value="UniProtKB-ARBA"/>
</dbReference>
<dbReference type="GO" id="GO:0016260">
    <property type="term" value="P:selenocysteine biosynthetic process"/>
    <property type="evidence" value="ECO:0007669"/>
    <property type="project" value="UniProtKB-UniRule"/>
</dbReference>
<dbReference type="GO" id="GO:0006434">
    <property type="term" value="P:seryl-tRNA aminoacylation"/>
    <property type="evidence" value="ECO:0007669"/>
    <property type="project" value="UniProtKB-UniRule"/>
</dbReference>
<dbReference type="CDD" id="cd00770">
    <property type="entry name" value="SerRS_core"/>
    <property type="match status" value="1"/>
</dbReference>
<dbReference type="Gene3D" id="3.30.930.10">
    <property type="entry name" value="Bira Bifunctional Protein, Domain 2"/>
    <property type="match status" value="1"/>
</dbReference>
<dbReference type="Gene3D" id="1.10.287.40">
    <property type="entry name" value="Serine-tRNA synthetase, tRNA binding domain"/>
    <property type="match status" value="1"/>
</dbReference>
<dbReference type="HAMAP" id="MF_00176">
    <property type="entry name" value="Ser_tRNA_synth_type1"/>
    <property type="match status" value="1"/>
</dbReference>
<dbReference type="InterPro" id="IPR002314">
    <property type="entry name" value="aa-tRNA-synt_IIb"/>
</dbReference>
<dbReference type="InterPro" id="IPR006195">
    <property type="entry name" value="aa-tRNA-synth_II"/>
</dbReference>
<dbReference type="InterPro" id="IPR045864">
    <property type="entry name" value="aa-tRNA-synth_II/BPL/LPL"/>
</dbReference>
<dbReference type="InterPro" id="IPR002317">
    <property type="entry name" value="Ser-tRNA-ligase_type_1"/>
</dbReference>
<dbReference type="InterPro" id="IPR015866">
    <property type="entry name" value="Ser-tRNA-synth_1_N"/>
</dbReference>
<dbReference type="InterPro" id="IPR042103">
    <property type="entry name" value="SerRS_1_N_sf"/>
</dbReference>
<dbReference type="InterPro" id="IPR033729">
    <property type="entry name" value="SerRS_core"/>
</dbReference>
<dbReference type="InterPro" id="IPR010978">
    <property type="entry name" value="tRNA-bd_arm"/>
</dbReference>
<dbReference type="NCBIfam" id="TIGR00414">
    <property type="entry name" value="serS"/>
    <property type="match status" value="1"/>
</dbReference>
<dbReference type="PANTHER" id="PTHR43697:SF1">
    <property type="entry name" value="SERINE--TRNA LIGASE"/>
    <property type="match status" value="1"/>
</dbReference>
<dbReference type="PANTHER" id="PTHR43697">
    <property type="entry name" value="SERYL-TRNA SYNTHETASE"/>
    <property type="match status" value="1"/>
</dbReference>
<dbReference type="Pfam" id="PF02403">
    <property type="entry name" value="Seryl_tRNA_N"/>
    <property type="match status" value="1"/>
</dbReference>
<dbReference type="Pfam" id="PF00587">
    <property type="entry name" value="tRNA-synt_2b"/>
    <property type="match status" value="1"/>
</dbReference>
<dbReference type="PIRSF" id="PIRSF001529">
    <property type="entry name" value="Ser-tRNA-synth_IIa"/>
    <property type="match status" value="1"/>
</dbReference>
<dbReference type="PRINTS" id="PR00981">
    <property type="entry name" value="TRNASYNTHSER"/>
</dbReference>
<dbReference type="SUPFAM" id="SSF55681">
    <property type="entry name" value="Class II aaRS and biotin synthetases"/>
    <property type="match status" value="1"/>
</dbReference>
<dbReference type="SUPFAM" id="SSF46589">
    <property type="entry name" value="tRNA-binding arm"/>
    <property type="match status" value="1"/>
</dbReference>
<dbReference type="PROSITE" id="PS50862">
    <property type="entry name" value="AA_TRNA_LIGASE_II"/>
    <property type="match status" value="1"/>
</dbReference>
<sequence length="426" mass="48973">MLDLKRIRNNPEEIKKQLLNRGEDFELSIIDKVVSLDEKRRKILVEVEALKNKRNQDSGEIAKIKRAGGNADTLVVEMKQVSDNIKQYDIQLSEINDKIEYIMLRIPNIPNPAVPEGKLDEDNVEIRRWMEPTKFKFQPKAHWDIGTNLNILDFERGGKVAGSRFTFYRGLGARLERAIVSYYLDFHTEKHGYEEILPPYMVNRTSMIGTGQLPKFEEDAFRVANNDFFLIPTAEVPVTNFYRNEVLKGEDLPIKYVAYSACFRAEAGSAGRDTRGIIRQHQFNKVELVKFAKPEQSYDELEKLTNDAEDVIKGLKIPYRVVKICKGDLGFTAALKYDIEVWMPSYNRYVEISSCSNFEDFQARRVNIKYKETPKDKPKYIHTLNGSGVAIGRTVAAILENYQQDDGSVLIPEILKPYMGGREVIK</sequence>